<name>Y1499_PSEF5</name>
<feature type="chain" id="PRO_1000044801" description="UPF0260 protein PFL_1499">
    <location>
        <begin position="1"/>
        <end position="149"/>
    </location>
</feature>
<proteinExistence type="inferred from homology"/>
<gene>
    <name type="ordered locus">PFL_1499</name>
</gene>
<organism>
    <name type="scientific">Pseudomonas fluorescens (strain ATCC BAA-477 / NRRL B-23932 / Pf-5)</name>
    <dbReference type="NCBI Taxonomy" id="220664"/>
    <lineage>
        <taxon>Bacteria</taxon>
        <taxon>Pseudomonadati</taxon>
        <taxon>Pseudomonadota</taxon>
        <taxon>Gammaproteobacteria</taxon>
        <taxon>Pseudomonadales</taxon>
        <taxon>Pseudomonadaceae</taxon>
        <taxon>Pseudomonas</taxon>
    </lineage>
</organism>
<evidence type="ECO:0000255" key="1">
    <source>
        <dbReference type="HAMAP-Rule" id="MF_00676"/>
    </source>
</evidence>
<accession>Q4KGK7</accession>
<comment type="similarity">
    <text evidence="1">Belongs to the UPF0260 family.</text>
</comment>
<dbReference type="EMBL" id="CP000076">
    <property type="protein sequence ID" value="AAY90782.1"/>
    <property type="molecule type" value="Genomic_DNA"/>
</dbReference>
<dbReference type="RefSeq" id="WP_011059837.1">
    <property type="nucleotide sequence ID" value="NC_004129.6"/>
</dbReference>
<dbReference type="SMR" id="Q4KGK7"/>
<dbReference type="STRING" id="220664.PFL_1499"/>
<dbReference type="KEGG" id="pfl:PFL_1499"/>
<dbReference type="PATRIC" id="fig|220664.5.peg.1533"/>
<dbReference type="eggNOG" id="COG2983">
    <property type="taxonomic scope" value="Bacteria"/>
</dbReference>
<dbReference type="HOGENOM" id="CLU_109769_0_1_6"/>
<dbReference type="Proteomes" id="UP000008540">
    <property type="component" value="Chromosome"/>
</dbReference>
<dbReference type="HAMAP" id="MF_00676">
    <property type="entry name" value="UPF0260"/>
    <property type="match status" value="1"/>
</dbReference>
<dbReference type="InterPro" id="IPR005358">
    <property type="entry name" value="Puta_zinc/iron-chelating_dom"/>
</dbReference>
<dbReference type="InterPro" id="IPR008228">
    <property type="entry name" value="UCP006173"/>
</dbReference>
<dbReference type="NCBIfam" id="NF003501">
    <property type="entry name" value="PRK05170.1-5"/>
    <property type="match status" value="1"/>
</dbReference>
<dbReference type="NCBIfam" id="NF003502">
    <property type="entry name" value="PRK05170.1-6"/>
    <property type="match status" value="1"/>
</dbReference>
<dbReference type="NCBIfam" id="NF003507">
    <property type="entry name" value="PRK05170.2-5"/>
    <property type="match status" value="1"/>
</dbReference>
<dbReference type="PANTHER" id="PTHR37421">
    <property type="entry name" value="UPF0260 PROTEIN YCGN"/>
    <property type="match status" value="1"/>
</dbReference>
<dbReference type="PANTHER" id="PTHR37421:SF1">
    <property type="entry name" value="UPF0260 PROTEIN YCGN"/>
    <property type="match status" value="1"/>
</dbReference>
<dbReference type="Pfam" id="PF03692">
    <property type="entry name" value="CxxCxxCC"/>
    <property type="match status" value="1"/>
</dbReference>
<dbReference type="PIRSF" id="PIRSF006173">
    <property type="entry name" value="UCP006173"/>
    <property type="match status" value="1"/>
</dbReference>
<sequence length="149" mass="17177">MAAKVEPFWIRKTLEQLDQDEWESLCDGCGLCCLQKLEDEDDNSVYYTRIACKLLDLKTCQCSDYPNRRDSVPDCIQLTPGKADEFKWLPRTCGYRLVSEGKDLPLWHHLVCGDRDAVHHERISQSGRMLAEGSVAEEDWEDHLIFRAG</sequence>
<protein>
    <recommendedName>
        <fullName evidence="1">UPF0260 protein PFL_1499</fullName>
    </recommendedName>
</protein>
<reference key="1">
    <citation type="journal article" date="2005" name="Nat. Biotechnol.">
        <title>Complete genome sequence of the plant commensal Pseudomonas fluorescens Pf-5.</title>
        <authorList>
            <person name="Paulsen I.T."/>
            <person name="Press C.M."/>
            <person name="Ravel J."/>
            <person name="Kobayashi D.Y."/>
            <person name="Myers G.S.A."/>
            <person name="Mavrodi D.V."/>
            <person name="DeBoy R.T."/>
            <person name="Seshadri R."/>
            <person name="Ren Q."/>
            <person name="Madupu R."/>
            <person name="Dodson R.J."/>
            <person name="Durkin A.S."/>
            <person name="Brinkac L.M."/>
            <person name="Daugherty S.C."/>
            <person name="Sullivan S.A."/>
            <person name="Rosovitz M.J."/>
            <person name="Gwinn M.L."/>
            <person name="Zhou L."/>
            <person name="Schneider D.J."/>
            <person name="Cartinhour S.W."/>
            <person name="Nelson W.C."/>
            <person name="Weidman J."/>
            <person name="Watkins K."/>
            <person name="Tran K."/>
            <person name="Khouri H."/>
            <person name="Pierson E.A."/>
            <person name="Pierson L.S. III"/>
            <person name="Thomashow L.S."/>
            <person name="Loper J.E."/>
        </authorList>
    </citation>
    <scope>NUCLEOTIDE SEQUENCE [LARGE SCALE GENOMIC DNA]</scope>
    <source>
        <strain>ATCC BAA-477 / NRRL B-23932 / Pf-5</strain>
    </source>
</reference>